<evidence type="ECO:0000255" key="1">
    <source>
        <dbReference type="HAMAP-Rule" id="MF_00098"/>
    </source>
</evidence>
<comment type="function">
    <text evidence="1">Is required not only for elongation of protein synthesis but also for the initiation of all mRNA translation through initiator tRNA(fMet) aminoacylation.</text>
</comment>
<comment type="catalytic activity">
    <reaction evidence="1">
        <text>tRNA(Met) + L-methionine + ATP = L-methionyl-tRNA(Met) + AMP + diphosphate</text>
        <dbReference type="Rhea" id="RHEA:13481"/>
        <dbReference type="Rhea" id="RHEA-COMP:9667"/>
        <dbReference type="Rhea" id="RHEA-COMP:9698"/>
        <dbReference type="ChEBI" id="CHEBI:30616"/>
        <dbReference type="ChEBI" id="CHEBI:33019"/>
        <dbReference type="ChEBI" id="CHEBI:57844"/>
        <dbReference type="ChEBI" id="CHEBI:78442"/>
        <dbReference type="ChEBI" id="CHEBI:78530"/>
        <dbReference type="ChEBI" id="CHEBI:456215"/>
        <dbReference type="EC" id="6.1.1.10"/>
    </reaction>
</comment>
<comment type="cofactor">
    <cofactor evidence="1">
        <name>Zn(2+)</name>
        <dbReference type="ChEBI" id="CHEBI:29105"/>
    </cofactor>
    <text evidence="1">Binds 1 zinc ion per subunit.</text>
</comment>
<comment type="subunit">
    <text evidence="1">Monomer.</text>
</comment>
<comment type="subcellular location">
    <subcellularLocation>
        <location evidence="1">Cytoplasm</location>
    </subcellularLocation>
</comment>
<comment type="similarity">
    <text evidence="1">Belongs to the class-I aminoacyl-tRNA synthetase family. MetG type 1 subfamily.</text>
</comment>
<reference key="1">
    <citation type="submission" date="2006-12" db="EMBL/GenBank/DDBJ databases">
        <title>Complete sequence of chromosome 1 of Paracoccus denitrificans PD1222.</title>
        <authorList>
            <person name="Copeland A."/>
            <person name="Lucas S."/>
            <person name="Lapidus A."/>
            <person name="Barry K."/>
            <person name="Detter J.C."/>
            <person name="Glavina del Rio T."/>
            <person name="Hammon N."/>
            <person name="Israni S."/>
            <person name="Dalin E."/>
            <person name="Tice H."/>
            <person name="Pitluck S."/>
            <person name="Munk A.C."/>
            <person name="Brettin T."/>
            <person name="Bruce D."/>
            <person name="Han C."/>
            <person name="Tapia R."/>
            <person name="Gilna P."/>
            <person name="Schmutz J."/>
            <person name="Larimer F."/>
            <person name="Land M."/>
            <person name="Hauser L."/>
            <person name="Kyrpides N."/>
            <person name="Lykidis A."/>
            <person name="Spiro S."/>
            <person name="Richardson D.J."/>
            <person name="Moir J.W.B."/>
            <person name="Ferguson S.J."/>
            <person name="van Spanning R.J.M."/>
            <person name="Richardson P."/>
        </authorList>
    </citation>
    <scope>NUCLEOTIDE SEQUENCE [LARGE SCALE GENOMIC DNA]</scope>
    <source>
        <strain>Pd 1222</strain>
    </source>
</reference>
<sequence>MARHLITSAIPYINGIKHLGNLVGSQLPADLYARYLRGRDNEVMFICATDEHGTPAELAAAKAGKPIAVYCAEMHEVQAEIARNFGLSFDHFGRSSSERNHVLTQHFAGKLDENGYIAEVEERQVYSIDDGRFLPDRYIEGTCPNCGYDKARGDQCENCTKQLDPTDLIEPRSAISGSTNLEVRATKHLYLRQRSLKDRIAAWIDSKTDWPILTTSIARKWLNDGDGLQDRGITRDLDWGIPVKKGDKPWPGMEGKVFYVWFDAPIEYIAATAEGADKRGEPDSAWRRWWRLDEGAEDVTYTQFMGKDNVPFHTLSFPATIIGSGEPWKLVDYIKSFNYLTYDGGQFSTSQGRGVFMDQALSILPADYWRWWLLSHAPESGDSEFTWDNFQQSVNKDLADVLGNFVSRITKFCRSKFGETIPQGGSYGPEEEALIQALTTRIRAYEGFMDHVEVRKSAAELRAIWVLGNEYLQSAAPWSTFKTDPDKAAMQVRLGLNLIRLYAVLSAPFIPFAADAMLAAMQTENRDWPDDVRAALEALPAGHAFTVPEVLFAKISDESRDEWQDRFKGIRG</sequence>
<protein>
    <recommendedName>
        <fullName evidence="1">Methionine--tRNA ligase</fullName>
        <ecNumber evidence="1">6.1.1.10</ecNumber>
    </recommendedName>
    <alternativeName>
        <fullName evidence="1">Methionyl-tRNA synthetase</fullName>
        <shortName evidence="1">MetRS</shortName>
    </alternativeName>
</protein>
<name>SYM_PARDP</name>
<proteinExistence type="inferred from homology"/>
<feature type="chain" id="PRO_0000331860" description="Methionine--tRNA ligase">
    <location>
        <begin position="1"/>
        <end position="572"/>
    </location>
</feature>
<feature type="short sequence motif" description="'HIGH' region">
    <location>
        <begin position="11"/>
        <end position="21"/>
    </location>
</feature>
<feature type="short sequence motif" description="'KMSKS' region">
    <location>
        <begin position="346"/>
        <end position="350"/>
    </location>
</feature>
<feature type="binding site" evidence="1">
    <location>
        <position position="143"/>
    </location>
    <ligand>
        <name>Zn(2+)</name>
        <dbReference type="ChEBI" id="CHEBI:29105"/>
    </ligand>
</feature>
<feature type="binding site" evidence="1">
    <location>
        <position position="146"/>
    </location>
    <ligand>
        <name>Zn(2+)</name>
        <dbReference type="ChEBI" id="CHEBI:29105"/>
    </ligand>
</feature>
<feature type="binding site" evidence="1">
    <location>
        <position position="156"/>
    </location>
    <ligand>
        <name>Zn(2+)</name>
        <dbReference type="ChEBI" id="CHEBI:29105"/>
    </ligand>
</feature>
<feature type="binding site" evidence="1">
    <location>
        <position position="159"/>
    </location>
    <ligand>
        <name>Zn(2+)</name>
        <dbReference type="ChEBI" id="CHEBI:29105"/>
    </ligand>
</feature>
<feature type="binding site" evidence="1">
    <location>
        <position position="349"/>
    </location>
    <ligand>
        <name>ATP</name>
        <dbReference type="ChEBI" id="CHEBI:30616"/>
    </ligand>
</feature>
<organism>
    <name type="scientific">Paracoccus denitrificans (strain Pd 1222)</name>
    <dbReference type="NCBI Taxonomy" id="318586"/>
    <lineage>
        <taxon>Bacteria</taxon>
        <taxon>Pseudomonadati</taxon>
        <taxon>Pseudomonadota</taxon>
        <taxon>Alphaproteobacteria</taxon>
        <taxon>Rhodobacterales</taxon>
        <taxon>Paracoccaceae</taxon>
        <taxon>Paracoccus</taxon>
    </lineage>
</organism>
<gene>
    <name evidence="1" type="primary">metG</name>
    <name type="ordered locus">Pden_2045</name>
</gene>
<dbReference type="EC" id="6.1.1.10" evidence="1"/>
<dbReference type="EMBL" id="CP000489">
    <property type="protein sequence ID" value="ABL70137.1"/>
    <property type="molecule type" value="Genomic_DNA"/>
</dbReference>
<dbReference type="RefSeq" id="WP_011748333.1">
    <property type="nucleotide sequence ID" value="NC_008686.1"/>
</dbReference>
<dbReference type="SMR" id="A1B3P3"/>
<dbReference type="STRING" id="318586.Pden_2045"/>
<dbReference type="EnsemblBacteria" id="ABL70137">
    <property type="protein sequence ID" value="ABL70137"/>
    <property type="gene ID" value="Pden_2045"/>
</dbReference>
<dbReference type="GeneID" id="93450448"/>
<dbReference type="KEGG" id="pde:Pden_2045"/>
<dbReference type="eggNOG" id="COG0143">
    <property type="taxonomic scope" value="Bacteria"/>
</dbReference>
<dbReference type="HOGENOM" id="CLU_009710_3_2_5"/>
<dbReference type="OrthoDB" id="9810191at2"/>
<dbReference type="Proteomes" id="UP000000361">
    <property type="component" value="Chromosome 1"/>
</dbReference>
<dbReference type="GO" id="GO:0017101">
    <property type="term" value="C:aminoacyl-tRNA synthetase multienzyme complex"/>
    <property type="evidence" value="ECO:0007669"/>
    <property type="project" value="TreeGrafter"/>
</dbReference>
<dbReference type="GO" id="GO:0005829">
    <property type="term" value="C:cytosol"/>
    <property type="evidence" value="ECO:0007669"/>
    <property type="project" value="TreeGrafter"/>
</dbReference>
<dbReference type="GO" id="GO:0005524">
    <property type="term" value="F:ATP binding"/>
    <property type="evidence" value="ECO:0007669"/>
    <property type="project" value="UniProtKB-UniRule"/>
</dbReference>
<dbReference type="GO" id="GO:0046872">
    <property type="term" value="F:metal ion binding"/>
    <property type="evidence" value="ECO:0007669"/>
    <property type="project" value="UniProtKB-KW"/>
</dbReference>
<dbReference type="GO" id="GO:0004825">
    <property type="term" value="F:methionine-tRNA ligase activity"/>
    <property type="evidence" value="ECO:0007669"/>
    <property type="project" value="UniProtKB-UniRule"/>
</dbReference>
<dbReference type="GO" id="GO:0006431">
    <property type="term" value="P:methionyl-tRNA aminoacylation"/>
    <property type="evidence" value="ECO:0007669"/>
    <property type="project" value="UniProtKB-UniRule"/>
</dbReference>
<dbReference type="CDD" id="cd07957">
    <property type="entry name" value="Anticodon_Ia_Met"/>
    <property type="match status" value="1"/>
</dbReference>
<dbReference type="CDD" id="cd00814">
    <property type="entry name" value="MetRS_core"/>
    <property type="match status" value="1"/>
</dbReference>
<dbReference type="FunFam" id="2.20.28.20:FF:000001">
    <property type="entry name" value="Methionine--tRNA ligase"/>
    <property type="match status" value="1"/>
</dbReference>
<dbReference type="Gene3D" id="3.40.50.620">
    <property type="entry name" value="HUPs"/>
    <property type="match status" value="1"/>
</dbReference>
<dbReference type="Gene3D" id="1.10.730.10">
    <property type="entry name" value="Isoleucyl-tRNA Synthetase, Domain 1"/>
    <property type="match status" value="1"/>
</dbReference>
<dbReference type="Gene3D" id="2.20.28.20">
    <property type="entry name" value="Methionyl-tRNA synthetase, Zn-domain"/>
    <property type="match status" value="1"/>
</dbReference>
<dbReference type="HAMAP" id="MF_00098">
    <property type="entry name" value="Met_tRNA_synth_type1"/>
    <property type="match status" value="1"/>
</dbReference>
<dbReference type="InterPro" id="IPR041872">
    <property type="entry name" value="Anticodon_Met"/>
</dbReference>
<dbReference type="InterPro" id="IPR023458">
    <property type="entry name" value="Met-tRNA_ligase_1"/>
</dbReference>
<dbReference type="InterPro" id="IPR014758">
    <property type="entry name" value="Met-tRNA_synth"/>
</dbReference>
<dbReference type="InterPro" id="IPR015413">
    <property type="entry name" value="Methionyl/Leucyl_tRNA_Synth"/>
</dbReference>
<dbReference type="InterPro" id="IPR033911">
    <property type="entry name" value="MetRS_core"/>
</dbReference>
<dbReference type="InterPro" id="IPR029038">
    <property type="entry name" value="MetRS_Zn"/>
</dbReference>
<dbReference type="InterPro" id="IPR014729">
    <property type="entry name" value="Rossmann-like_a/b/a_fold"/>
</dbReference>
<dbReference type="InterPro" id="IPR009080">
    <property type="entry name" value="tRNAsynth_Ia_anticodon-bd"/>
</dbReference>
<dbReference type="NCBIfam" id="TIGR00398">
    <property type="entry name" value="metG"/>
    <property type="match status" value="1"/>
</dbReference>
<dbReference type="PANTHER" id="PTHR45765">
    <property type="entry name" value="METHIONINE--TRNA LIGASE"/>
    <property type="match status" value="1"/>
</dbReference>
<dbReference type="PANTHER" id="PTHR45765:SF1">
    <property type="entry name" value="METHIONINE--TRNA LIGASE, CYTOPLASMIC"/>
    <property type="match status" value="1"/>
</dbReference>
<dbReference type="Pfam" id="PF19303">
    <property type="entry name" value="Anticodon_3"/>
    <property type="match status" value="1"/>
</dbReference>
<dbReference type="Pfam" id="PF09334">
    <property type="entry name" value="tRNA-synt_1g"/>
    <property type="match status" value="1"/>
</dbReference>
<dbReference type="PRINTS" id="PR01041">
    <property type="entry name" value="TRNASYNTHMET"/>
</dbReference>
<dbReference type="SUPFAM" id="SSF47323">
    <property type="entry name" value="Anticodon-binding domain of a subclass of class I aminoacyl-tRNA synthetases"/>
    <property type="match status" value="1"/>
</dbReference>
<dbReference type="SUPFAM" id="SSF57770">
    <property type="entry name" value="Methionyl-tRNA synthetase (MetRS), Zn-domain"/>
    <property type="match status" value="1"/>
</dbReference>
<dbReference type="SUPFAM" id="SSF52374">
    <property type="entry name" value="Nucleotidylyl transferase"/>
    <property type="match status" value="1"/>
</dbReference>
<accession>A1B3P3</accession>
<keyword id="KW-0030">Aminoacyl-tRNA synthetase</keyword>
<keyword id="KW-0067">ATP-binding</keyword>
<keyword id="KW-0963">Cytoplasm</keyword>
<keyword id="KW-0436">Ligase</keyword>
<keyword id="KW-0479">Metal-binding</keyword>
<keyword id="KW-0547">Nucleotide-binding</keyword>
<keyword id="KW-0648">Protein biosynthesis</keyword>
<keyword id="KW-1185">Reference proteome</keyword>
<keyword id="KW-0862">Zinc</keyword>